<evidence type="ECO:0000255" key="1">
    <source>
        <dbReference type="HAMAP-Rule" id="MF_01664"/>
    </source>
</evidence>
<organism>
    <name type="scientific">Listeria monocytogenes serotype 4b (strain CLIP80459)</name>
    <dbReference type="NCBI Taxonomy" id="568819"/>
    <lineage>
        <taxon>Bacteria</taxon>
        <taxon>Bacillati</taxon>
        <taxon>Bacillota</taxon>
        <taxon>Bacilli</taxon>
        <taxon>Bacillales</taxon>
        <taxon>Listeriaceae</taxon>
        <taxon>Listeria</taxon>
    </lineage>
</organism>
<protein>
    <recommendedName>
        <fullName evidence="1">Heme A synthase</fullName>
        <shortName evidence="1">HAS</shortName>
        <ecNumber evidence="1">1.17.99.9</ecNumber>
    </recommendedName>
    <alternativeName>
        <fullName evidence="1">Cytochrome aa3-controlling protein</fullName>
    </alternativeName>
</protein>
<reference key="1">
    <citation type="journal article" date="2012" name="BMC Genomics">
        <title>Comparative genomics and transcriptomics of lineages I, II, and III strains of Listeria monocytogenes.</title>
        <authorList>
            <person name="Hain T."/>
            <person name="Ghai R."/>
            <person name="Billion A."/>
            <person name="Kuenne C.T."/>
            <person name="Steinweg C."/>
            <person name="Izar B."/>
            <person name="Mohamed W."/>
            <person name="Mraheil M."/>
            <person name="Domann E."/>
            <person name="Schaffrath S."/>
            <person name="Karst U."/>
            <person name="Goesmann A."/>
            <person name="Oehm S."/>
            <person name="Puhler A."/>
            <person name="Merkl R."/>
            <person name="Vorwerk S."/>
            <person name="Glaser P."/>
            <person name="Garrido P."/>
            <person name="Rusniok C."/>
            <person name="Buchrieser C."/>
            <person name="Goebel W."/>
            <person name="Chakraborty T."/>
        </authorList>
    </citation>
    <scope>NUCLEOTIDE SEQUENCE [LARGE SCALE GENOMIC DNA]</scope>
    <source>
        <strain>CLIP80459</strain>
    </source>
</reference>
<keyword id="KW-1003">Cell membrane</keyword>
<keyword id="KW-1015">Disulfide bond</keyword>
<keyword id="KW-0350">Heme biosynthesis</keyword>
<keyword id="KW-0408">Iron</keyword>
<keyword id="KW-0472">Membrane</keyword>
<keyword id="KW-0479">Metal-binding</keyword>
<keyword id="KW-0560">Oxidoreductase</keyword>
<keyword id="KW-0812">Transmembrane</keyword>
<keyword id="KW-1133">Transmembrane helix</keyword>
<dbReference type="EC" id="1.17.99.9" evidence="1"/>
<dbReference type="EMBL" id="FM242711">
    <property type="protein sequence ID" value="CAS05838.1"/>
    <property type="molecule type" value="Genomic_DNA"/>
</dbReference>
<dbReference type="RefSeq" id="WP_003723941.1">
    <property type="nucleotide sequence ID" value="NC_012488.1"/>
</dbReference>
<dbReference type="SMR" id="C1KX11"/>
<dbReference type="KEGG" id="lmc:Lm4b_02079"/>
<dbReference type="HOGENOM" id="CLU_041525_3_1_9"/>
<dbReference type="UniPathway" id="UPA00269">
    <property type="reaction ID" value="UER00713"/>
</dbReference>
<dbReference type="GO" id="GO:0005886">
    <property type="term" value="C:plasma membrane"/>
    <property type="evidence" value="ECO:0007669"/>
    <property type="project" value="UniProtKB-SubCell"/>
</dbReference>
<dbReference type="GO" id="GO:0046872">
    <property type="term" value="F:metal ion binding"/>
    <property type="evidence" value="ECO:0007669"/>
    <property type="project" value="UniProtKB-KW"/>
</dbReference>
<dbReference type="GO" id="GO:0016653">
    <property type="term" value="F:oxidoreductase activity, acting on NAD(P)H, heme protein as acceptor"/>
    <property type="evidence" value="ECO:0007669"/>
    <property type="project" value="InterPro"/>
</dbReference>
<dbReference type="GO" id="GO:0006784">
    <property type="term" value="P:heme A biosynthetic process"/>
    <property type="evidence" value="ECO:0007669"/>
    <property type="project" value="UniProtKB-UniRule"/>
</dbReference>
<dbReference type="HAMAP" id="MF_01664">
    <property type="entry name" value="HemeA_synth_type1"/>
    <property type="match status" value="1"/>
</dbReference>
<dbReference type="InterPro" id="IPR003780">
    <property type="entry name" value="COX15/CtaA_fam"/>
</dbReference>
<dbReference type="InterPro" id="IPR050450">
    <property type="entry name" value="COX15/CtaA_HemeA_synthase"/>
</dbReference>
<dbReference type="InterPro" id="IPR023755">
    <property type="entry name" value="HemeA_Synthase_type1"/>
</dbReference>
<dbReference type="PANTHER" id="PTHR35457">
    <property type="entry name" value="HEME A SYNTHASE"/>
    <property type="match status" value="1"/>
</dbReference>
<dbReference type="PANTHER" id="PTHR35457:SF1">
    <property type="entry name" value="HEME A SYNTHASE"/>
    <property type="match status" value="1"/>
</dbReference>
<dbReference type="Pfam" id="PF02628">
    <property type="entry name" value="COX15-CtaA"/>
    <property type="match status" value="1"/>
</dbReference>
<gene>
    <name evidence="1" type="primary">ctaA</name>
    <name type="ordered locus">Lm4b_02079</name>
</gene>
<proteinExistence type="inferred from homology"/>
<accession>C1KX11</accession>
<sequence>MKKFLKVWSVLTIICMTVVVFGGALVTKTGSADGCGNSWPLCNGQLVRLTDVTPEKLIEFMHRMTTGISSIFVIVLAICAWIYMKNRRETKPLAIIAVLFLIIQALMGMAAVVWGQNPYIMALHFGISIICYASIVLLALMIFEVDRKFDARNLVMGTKLRINIYALTIYTYLAVYTGALVRHEKASMAVPVWPFENGHFIMPTSVQDYVQYFHRLAAFILIVWLLYVTWLVFRDYRRYRVLTFSMVLSLVFIALQAVTGALSVYTGVNLYIALAHSLIITMLFALLCYLCLLASRSKSNRLRIK</sequence>
<name>CTAA_LISMC</name>
<comment type="function">
    <text evidence="1">Catalyzes the conversion of heme O to heme A by two successive hydroxylations of the methyl group at C8. The first hydroxylation forms heme I, the second hydroxylation results in an unstable dihydroxymethyl group, which spontaneously dehydrates, resulting in the formyl group of heme A.</text>
</comment>
<comment type="catalytic activity">
    <reaction evidence="1">
        <text>Fe(II)-heme o + 2 A + H2O = Fe(II)-heme a + 2 AH2</text>
        <dbReference type="Rhea" id="RHEA:63388"/>
        <dbReference type="ChEBI" id="CHEBI:13193"/>
        <dbReference type="ChEBI" id="CHEBI:15377"/>
        <dbReference type="ChEBI" id="CHEBI:17499"/>
        <dbReference type="ChEBI" id="CHEBI:60530"/>
        <dbReference type="ChEBI" id="CHEBI:61715"/>
        <dbReference type="EC" id="1.17.99.9"/>
    </reaction>
    <physiologicalReaction direction="left-to-right" evidence="1">
        <dbReference type="Rhea" id="RHEA:63389"/>
    </physiologicalReaction>
</comment>
<comment type="cofactor">
    <cofactor evidence="1">
        <name>heme b</name>
        <dbReference type="ChEBI" id="CHEBI:60344"/>
    </cofactor>
</comment>
<comment type="pathway">
    <text evidence="1">Porphyrin-containing compound metabolism; heme A biosynthesis; heme A from heme O: step 1/1.</text>
</comment>
<comment type="subunit">
    <text evidence="1">Interacts with CtaB.</text>
</comment>
<comment type="subcellular location">
    <subcellularLocation>
        <location evidence="1">Cell membrane</location>
        <topology evidence="1">Multi-pass membrane protein</topology>
    </subcellularLocation>
</comment>
<comment type="domain">
    <text evidence="1">The N-half (TM1-TM4) and C-half (TM5-TM8) domains are connected by an intracellular loop. Each domain is formed from four-helix bundles and they align in a pseudo twofold symmetry manner. The N-half domain is the substrate-heme O binding domain and the C-half domain is the cofactor heme B binding domain.</text>
</comment>
<comment type="domain">
    <text evidence="1">The cysteines of disulfide bond Cys-35 and Cys-42 may be involved in transfer of reducing equivalents from quinol in the membrane to the active site of the enzyme.</text>
</comment>
<comment type="similarity">
    <text evidence="1">Belongs to the COX15/CtaA family. Type 1 subfamily.</text>
</comment>
<feature type="chain" id="PRO_1000215876" description="Heme A synthase">
    <location>
        <begin position="1"/>
        <end position="305"/>
    </location>
</feature>
<feature type="topological domain" description="Cytoplasmic" evidence="1">
    <location>
        <begin position="1"/>
        <end position="6"/>
    </location>
</feature>
<feature type="transmembrane region" description="Helical" evidence="1">
    <location>
        <begin position="7"/>
        <end position="27"/>
    </location>
</feature>
<feature type="topological domain" description="Extracellular" evidence="1">
    <location>
        <begin position="28"/>
        <end position="63"/>
    </location>
</feature>
<feature type="transmembrane region" description="Helical" evidence="1">
    <location>
        <begin position="64"/>
        <end position="84"/>
    </location>
</feature>
<feature type="topological domain" description="Cytoplasmic" evidence="1">
    <location>
        <begin position="85"/>
        <end position="92"/>
    </location>
</feature>
<feature type="transmembrane region" description="Helical" evidence="1">
    <location>
        <begin position="93"/>
        <end position="113"/>
    </location>
</feature>
<feature type="topological domain" description="Extracellular" evidence="1">
    <location>
        <begin position="114"/>
        <end position="122"/>
    </location>
</feature>
<feature type="transmembrane region" description="Helical" evidence="1">
    <location>
        <begin position="123"/>
        <end position="143"/>
    </location>
</feature>
<feature type="topological domain" description="Cytoplasmic" evidence="1">
    <location>
        <begin position="144"/>
        <end position="160"/>
    </location>
</feature>
<feature type="transmembrane region" description="Helical" evidence="1">
    <location>
        <begin position="161"/>
        <end position="181"/>
    </location>
</feature>
<feature type="topological domain" description="Extracellular" evidence="1">
    <location>
        <begin position="182"/>
        <end position="212"/>
    </location>
</feature>
<feature type="transmembrane region" description="Helical" evidence="1">
    <location>
        <begin position="213"/>
        <end position="233"/>
    </location>
</feature>
<feature type="topological domain" description="Cytoplasmic" evidence="1">
    <location>
        <begin position="234"/>
        <end position="240"/>
    </location>
</feature>
<feature type="transmembrane region" description="Helical" evidence="1">
    <location>
        <begin position="241"/>
        <end position="261"/>
    </location>
</feature>
<feature type="topological domain" description="Extracellular" evidence="1">
    <location>
        <begin position="262"/>
        <end position="271"/>
    </location>
</feature>
<feature type="transmembrane region" description="Helical" evidence="1">
    <location>
        <begin position="272"/>
        <end position="292"/>
    </location>
</feature>
<feature type="topological domain" description="Cytoplasmic" evidence="1">
    <location>
        <begin position="293"/>
        <end position="305"/>
    </location>
</feature>
<feature type="active site" evidence="1">
    <location>
        <position position="59"/>
    </location>
</feature>
<feature type="binding site" description="axial binding residue" evidence="1">
    <location>
        <position position="62"/>
    </location>
    <ligand>
        <name>heme o</name>
        <dbReference type="ChEBI" id="CHEBI:24480"/>
    </ligand>
    <ligandPart>
        <name>Fe</name>
        <dbReference type="ChEBI" id="CHEBI:18248"/>
    </ligandPart>
</feature>
<feature type="binding site" description="axial binding residue" evidence="1">
    <location>
        <position position="124"/>
    </location>
    <ligand>
        <name>heme o</name>
        <dbReference type="ChEBI" id="CHEBI:24480"/>
    </ligand>
    <ligandPart>
        <name>Fe</name>
        <dbReference type="ChEBI" id="CHEBI:18248"/>
    </ligandPart>
</feature>
<feature type="binding site" description="axial binding residue" evidence="1">
    <location>
        <position position="214"/>
    </location>
    <ligand>
        <name>heme b</name>
        <dbReference type="ChEBI" id="CHEBI:60344"/>
    </ligand>
    <ligandPart>
        <name>Fe</name>
        <dbReference type="ChEBI" id="CHEBI:18248"/>
    </ligandPart>
</feature>
<feature type="binding site" description="axial binding residue" evidence="1">
    <location>
        <position position="276"/>
    </location>
    <ligand>
        <name>heme b</name>
        <dbReference type="ChEBI" id="CHEBI:60344"/>
    </ligand>
    <ligandPart>
        <name>Fe</name>
        <dbReference type="ChEBI" id="CHEBI:18248"/>
    </ligandPart>
</feature>
<feature type="disulfide bond" description="Essential for catalytic activity" evidence="1">
    <location>
        <begin position="35"/>
        <end position="42"/>
    </location>
</feature>